<gene>
    <name evidence="1" type="primary">frr</name>
    <name type="ordered locus">Arth_1370</name>
</gene>
<accession>A0JUP4</accession>
<organism>
    <name type="scientific">Arthrobacter sp. (strain FB24)</name>
    <dbReference type="NCBI Taxonomy" id="290399"/>
    <lineage>
        <taxon>Bacteria</taxon>
        <taxon>Bacillati</taxon>
        <taxon>Actinomycetota</taxon>
        <taxon>Actinomycetes</taxon>
        <taxon>Micrococcales</taxon>
        <taxon>Micrococcaceae</taxon>
        <taxon>Arthrobacter</taxon>
    </lineage>
</organism>
<reference key="1">
    <citation type="journal article" date="2013" name="Stand. Genomic Sci.">
        <title>Complete genome sequence of Arthrobacter sp. strain FB24.</title>
        <authorList>
            <person name="Nakatsu C.H."/>
            <person name="Barabote R."/>
            <person name="Thompson S."/>
            <person name="Bruce D."/>
            <person name="Detter C."/>
            <person name="Brettin T."/>
            <person name="Han C."/>
            <person name="Beasley F."/>
            <person name="Chen W."/>
            <person name="Konopka A."/>
            <person name="Xie G."/>
        </authorList>
    </citation>
    <scope>NUCLEOTIDE SEQUENCE [LARGE SCALE GENOMIC DNA]</scope>
    <source>
        <strain>FB24</strain>
    </source>
</reference>
<dbReference type="EMBL" id="CP000454">
    <property type="protein sequence ID" value="ABK02764.1"/>
    <property type="molecule type" value="Genomic_DNA"/>
</dbReference>
<dbReference type="RefSeq" id="WP_011691231.1">
    <property type="nucleotide sequence ID" value="NC_008541.1"/>
</dbReference>
<dbReference type="SMR" id="A0JUP4"/>
<dbReference type="STRING" id="290399.Arth_1370"/>
<dbReference type="KEGG" id="art:Arth_1370"/>
<dbReference type="eggNOG" id="COG0233">
    <property type="taxonomic scope" value="Bacteria"/>
</dbReference>
<dbReference type="HOGENOM" id="CLU_073981_2_0_11"/>
<dbReference type="OrthoDB" id="9804006at2"/>
<dbReference type="Proteomes" id="UP000000754">
    <property type="component" value="Chromosome"/>
</dbReference>
<dbReference type="GO" id="GO:0005737">
    <property type="term" value="C:cytoplasm"/>
    <property type="evidence" value="ECO:0007669"/>
    <property type="project" value="UniProtKB-SubCell"/>
</dbReference>
<dbReference type="GO" id="GO:0043023">
    <property type="term" value="F:ribosomal large subunit binding"/>
    <property type="evidence" value="ECO:0007669"/>
    <property type="project" value="TreeGrafter"/>
</dbReference>
<dbReference type="GO" id="GO:0006415">
    <property type="term" value="P:translational termination"/>
    <property type="evidence" value="ECO:0007669"/>
    <property type="project" value="UniProtKB-UniRule"/>
</dbReference>
<dbReference type="CDD" id="cd00520">
    <property type="entry name" value="RRF"/>
    <property type="match status" value="1"/>
</dbReference>
<dbReference type="FunFam" id="1.10.132.20:FF:000001">
    <property type="entry name" value="Ribosome-recycling factor"/>
    <property type="match status" value="1"/>
</dbReference>
<dbReference type="FunFam" id="3.30.1360.40:FF:000001">
    <property type="entry name" value="Ribosome-recycling factor"/>
    <property type="match status" value="1"/>
</dbReference>
<dbReference type="Gene3D" id="3.30.1360.40">
    <property type="match status" value="1"/>
</dbReference>
<dbReference type="Gene3D" id="1.10.132.20">
    <property type="entry name" value="Ribosome-recycling factor"/>
    <property type="match status" value="1"/>
</dbReference>
<dbReference type="HAMAP" id="MF_00040">
    <property type="entry name" value="RRF"/>
    <property type="match status" value="1"/>
</dbReference>
<dbReference type="InterPro" id="IPR002661">
    <property type="entry name" value="Ribosome_recyc_fac"/>
</dbReference>
<dbReference type="InterPro" id="IPR023584">
    <property type="entry name" value="Ribosome_recyc_fac_dom"/>
</dbReference>
<dbReference type="InterPro" id="IPR036191">
    <property type="entry name" value="RRF_sf"/>
</dbReference>
<dbReference type="NCBIfam" id="TIGR00496">
    <property type="entry name" value="frr"/>
    <property type="match status" value="1"/>
</dbReference>
<dbReference type="PANTHER" id="PTHR20982:SF3">
    <property type="entry name" value="MITOCHONDRIAL RIBOSOME RECYCLING FACTOR PSEUDO 1"/>
    <property type="match status" value="1"/>
</dbReference>
<dbReference type="PANTHER" id="PTHR20982">
    <property type="entry name" value="RIBOSOME RECYCLING FACTOR"/>
    <property type="match status" value="1"/>
</dbReference>
<dbReference type="Pfam" id="PF01765">
    <property type="entry name" value="RRF"/>
    <property type="match status" value="1"/>
</dbReference>
<dbReference type="SUPFAM" id="SSF55194">
    <property type="entry name" value="Ribosome recycling factor, RRF"/>
    <property type="match status" value="1"/>
</dbReference>
<keyword id="KW-0963">Cytoplasm</keyword>
<keyword id="KW-0648">Protein biosynthesis</keyword>
<keyword id="KW-1185">Reference proteome</keyword>
<name>RRF_ARTS2</name>
<protein>
    <recommendedName>
        <fullName evidence="1">Ribosome-recycling factor</fullName>
        <shortName evidence="1">RRF</shortName>
    </recommendedName>
    <alternativeName>
        <fullName evidence="1">Ribosome-releasing factor</fullName>
    </alternativeName>
</protein>
<feature type="chain" id="PRO_1000071058" description="Ribosome-recycling factor">
    <location>
        <begin position="1"/>
        <end position="185"/>
    </location>
</feature>
<evidence type="ECO:0000255" key="1">
    <source>
        <dbReference type="HAMAP-Rule" id="MF_00040"/>
    </source>
</evidence>
<proteinExistence type="inferred from homology"/>
<sequence length="185" mass="20491">MIEETLLEAGDKMDKAVEVAKEDFASIRTGRATPGLYNRVLVDYYGSPTPLQQLASFAVPDARTILITPFDKTALRDIERALSDSEVGANPSNDGNVIRITIPELTKERRKEYVKIVKAKGEDAKVSIRNIRRKAKETLDKLVKDGEAGEDEGARGEKELDALTKAHVDGIDDLLKRKEAELLEV</sequence>
<comment type="function">
    <text evidence="1">Responsible for the release of ribosomes from messenger RNA at the termination of protein biosynthesis. May increase the efficiency of translation by recycling ribosomes from one round of translation to another.</text>
</comment>
<comment type="subcellular location">
    <subcellularLocation>
        <location evidence="1">Cytoplasm</location>
    </subcellularLocation>
</comment>
<comment type="similarity">
    <text evidence="1">Belongs to the RRF family.</text>
</comment>